<organism>
    <name type="scientific">Gossypium hirsutum</name>
    <name type="common">Upland cotton</name>
    <name type="synonym">Gossypium mexicanum</name>
    <dbReference type="NCBI Taxonomy" id="3635"/>
    <lineage>
        <taxon>Eukaryota</taxon>
        <taxon>Viridiplantae</taxon>
        <taxon>Streptophyta</taxon>
        <taxon>Embryophyta</taxon>
        <taxon>Tracheophyta</taxon>
        <taxon>Spermatophyta</taxon>
        <taxon>Magnoliopsida</taxon>
        <taxon>eudicotyledons</taxon>
        <taxon>Gunneridae</taxon>
        <taxon>Pentapetalae</taxon>
        <taxon>rosids</taxon>
        <taxon>malvids</taxon>
        <taxon>Malvales</taxon>
        <taxon>Malvaceae</taxon>
        <taxon>Malvoideae</taxon>
        <taxon>Gossypium</taxon>
    </lineage>
</organism>
<protein>
    <recommendedName>
        <fullName>Catalase isozyme 2</fullName>
        <ecNumber>1.11.1.6</ecNumber>
    </recommendedName>
</protein>
<sequence length="492" mass="56935">MDPYKFRPSSSFDSPFWTTNSGAPVWNNNSSLTVGARGPILLEDYHLVEKLANFDRERIPERVVHARGASAKGFFEVTHDISQLTCADFLRAPGVQTPLIVRFSTVIHERGSPETLRDPRGFAVKFYTREGNFDLVGNNFPVFFIRDGMKFPDMVHALKPNPKSHIQENWRILDFFSHHPESLHMFTFLFDDIGVPQDYRHMDGSGVHTYTLINKAGKSHYVKFHWKPTCGVKSLLEDEAIRVGGANHSHATQDLYDSIAAGNYPEWKLFIQIMDPLHEDRFDFDPLDVTKTWPEDIFPLQPMGRMVLNKNIDNFFAENEQLAFCPSLIVPGIYYSDDKLLQTRIFSYSDTQRHRLGPNYLQLPANAPKCAHHNNHHEGFMNFMHRDEEVNYFPSRYDPVRHAEKHPIPSTVLSGKREKCIIGKENNFKQPGERYRSFSADRQERFINRWIDALSDPRVTHEIRSIWISYWSQADKSLGQKIASRLNVRPSI</sequence>
<keyword id="KW-0349">Heme</keyword>
<keyword id="KW-0376">Hydrogen peroxide</keyword>
<keyword id="KW-0408">Iron</keyword>
<keyword id="KW-0479">Metal-binding</keyword>
<keyword id="KW-0560">Oxidoreductase</keyword>
<keyword id="KW-0575">Peroxidase</keyword>
<keyword id="KW-0576">Peroxisome</keyword>
<keyword id="KW-1185">Reference proteome</keyword>
<name>CATA2_GOSHI</name>
<feature type="chain" id="PRO_0000084939" description="Catalase isozyme 2">
    <location>
        <begin position="1"/>
        <end position="492"/>
    </location>
</feature>
<feature type="active site" evidence="2">
    <location>
        <position position="65"/>
    </location>
</feature>
<feature type="active site" evidence="2">
    <location>
        <position position="138"/>
    </location>
</feature>
<feature type="binding site" description="axial binding residue" evidence="1">
    <location>
        <position position="348"/>
    </location>
    <ligand>
        <name>heme</name>
        <dbReference type="ChEBI" id="CHEBI:30413"/>
    </ligand>
    <ligandPart>
        <name>Fe</name>
        <dbReference type="ChEBI" id="CHEBI:18248"/>
    </ligandPart>
</feature>
<gene>
    <name type="primary">CAT2</name>
    <name type="synonym">SU2</name>
</gene>
<dbReference type="EC" id="1.11.1.6"/>
<dbReference type="EMBL" id="X56675">
    <property type="protein sequence ID" value="CAA39998.1"/>
    <property type="molecule type" value="mRNA"/>
</dbReference>
<dbReference type="PIR" id="S17493">
    <property type="entry name" value="S17493"/>
</dbReference>
<dbReference type="RefSeq" id="NP_001314401.1">
    <property type="nucleotide sequence ID" value="NM_001327472.1"/>
</dbReference>
<dbReference type="SMR" id="P30567"/>
<dbReference type="STRING" id="3635.P30567"/>
<dbReference type="PeroxiBase" id="1803">
    <property type="entry name" value="GhKat02"/>
</dbReference>
<dbReference type="PaxDb" id="3635-P30567"/>
<dbReference type="GeneID" id="107943729"/>
<dbReference type="KEGG" id="ghi:107943729"/>
<dbReference type="Proteomes" id="UP000189702">
    <property type="component" value="Unplaced"/>
</dbReference>
<dbReference type="GO" id="GO:0005737">
    <property type="term" value="C:cytoplasm"/>
    <property type="evidence" value="ECO:0000318"/>
    <property type="project" value="GO_Central"/>
</dbReference>
<dbReference type="GO" id="GO:0009514">
    <property type="term" value="C:glyoxysome"/>
    <property type="evidence" value="ECO:0000304"/>
    <property type="project" value="AgBase"/>
</dbReference>
<dbReference type="GO" id="GO:0005634">
    <property type="term" value="C:nucleus"/>
    <property type="evidence" value="ECO:0000314"/>
    <property type="project" value="AgBase"/>
</dbReference>
<dbReference type="GO" id="GO:0004096">
    <property type="term" value="F:catalase activity"/>
    <property type="evidence" value="ECO:0000314"/>
    <property type="project" value="AgBase"/>
</dbReference>
<dbReference type="GO" id="GO:0020037">
    <property type="term" value="F:heme binding"/>
    <property type="evidence" value="ECO:0000318"/>
    <property type="project" value="GO_Central"/>
</dbReference>
<dbReference type="GO" id="GO:0046872">
    <property type="term" value="F:metal ion binding"/>
    <property type="evidence" value="ECO:0007669"/>
    <property type="project" value="UniProtKB-KW"/>
</dbReference>
<dbReference type="GO" id="GO:0042744">
    <property type="term" value="P:hydrogen peroxide catabolic process"/>
    <property type="evidence" value="ECO:0000318"/>
    <property type="project" value="GO_Central"/>
</dbReference>
<dbReference type="GO" id="GO:0042542">
    <property type="term" value="P:response to hydrogen peroxide"/>
    <property type="evidence" value="ECO:0000318"/>
    <property type="project" value="GO_Central"/>
</dbReference>
<dbReference type="GO" id="GO:0009845">
    <property type="term" value="P:seed germination"/>
    <property type="evidence" value="ECO:0000314"/>
    <property type="project" value="AgBase"/>
</dbReference>
<dbReference type="CDD" id="cd08154">
    <property type="entry name" value="catalase_clade_1"/>
    <property type="match status" value="1"/>
</dbReference>
<dbReference type="FunFam" id="2.40.180.10:FF:000002">
    <property type="entry name" value="Catalase"/>
    <property type="match status" value="1"/>
</dbReference>
<dbReference type="Gene3D" id="2.40.180.10">
    <property type="entry name" value="Catalase core domain"/>
    <property type="match status" value="1"/>
</dbReference>
<dbReference type="InterPro" id="IPR018028">
    <property type="entry name" value="Catalase"/>
</dbReference>
<dbReference type="InterPro" id="IPR024708">
    <property type="entry name" value="Catalase_AS"/>
</dbReference>
<dbReference type="InterPro" id="IPR024711">
    <property type="entry name" value="Catalase_clade1/3"/>
</dbReference>
<dbReference type="InterPro" id="IPR011614">
    <property type="entry name" value="Catalase_core"/>
</dbReference>
<dbReference type="InterPro" id="IPR002226">
    <property type="entry name" value="Catalase_haem_BS"/>
</dbReference>
<dbReference type="InterPro" id="IPR010582">
    <property type="entry name" value="Catalase_immune_responsive"/>
</dbReference>
<dbReference type="InterPro" id="IPR020835">
    <property type="entry name" value="Catalase_sf"/>
</dbReference>
<dbReference type="PANTHER" id="PTHR11465">
    <property type="entry name" value="CATALASE"/>
    <property type="match status" value="1"/>
</dbReference>
<dbReference type="PANTHER" id="PTHR11465:SF41">
    <property type="entry name" value="CATALASE ISOZYME 2"/>
    <property type="match status" value="1"/>
</dbReference>
<dbReference type="Pfam" id="PF00199">
    <property type="entry name" value="Catalase"/>
    <property type="match status" value="1"/>
</dbReference>
<dbReference type="Pfam" id="PF06628">
    <property type="entry name" value="Catalase-rel"/>
    <property type="match status" value="1"/>
</dbReference>
<dbReference type="PIRSF" id="PIRSF038928">
    <property type="entry name" value="Catalase_clade1-3"/>
    <property type="match status" value="1"/>
</dbReference>
<dbReference type="PRINTS" id="PR00067">
    <property type="entry name" value="CATALASE"/>
</dbReference>
<dbReference type="SMART" id="SM01060">
    <property type="entry name" value="Catalase"/>
    <property type="match status" value="1"/>
</dbReference>
<dbReference type="SUPFAM" id="SSF56634">
    <property type="entry name" value="Heme-dependent catalase-like"/>
    <property type="match status" value="1"/>
</dbReference>
<dbReference type="PROSITE" id="PS00437">
    <property type="entry name" value="CATALASE_1"/>
    <property type="match status" value="1"/>
</dbReference>
<dbReference type="PROSITE" id="PS00438">
    <property type="entry name" value="CATALASE_2"/>
    <property type="match status" value="1"/>
</dbReference>
<dbReference type="PROSITE" id="PS51402">
    <property type="entry name" value="CATALASE_3"/>
    <property type="match status" value="1"/>
</dbReference>
<reference key="1">
    <citation type="journal article" date="1991" name="Arch. Biochem. Biophys.">
        <title>Two genes encode the two subunits of cottonseed catalase.</title>
        <authorList>
            <person name="Ni W."/>
            <person name="Trelease R.N."/>
        </authorList>
    </citation>
    <scope>NUCLEOTIDE SEQUENCE [MRNA]</scope>
    <source>
        <strain>cv. Deltapine 62</strain>
        <tissue>Cotyledon</tissue>
    </source>
</reference>
<proteinExistence type="evidence at transcript level"/>
<accession>P30567</accession>
<comment type="function">
    <text>Occurs in almost all aerobically respiring organisms and serves to protect cells from the toxic effects of hydrogen peroxide.</text>
</comment>
<comment type="catalytic activity">
    <reaction evidence="2">
        <text>2 H2O2 = O2 + 2 H2O</text>
        <dbReference type="Rhea" id="RHEA:20309"/>
        <dbReference type="ChEBI" id="CHEBI:15377"/>
        <dbReference type="ChEBI" id="CHEBI:15379"/>
        <dbReference type="ChEBI" id="CHEBI:16240"/>
        <dbReference type="EC" id="1.11.1.6"/>
    </reaction>
</comment>
<comment type="cofactor">
    <cofactor>
        <name>heme</name>
        <dbReference type="ChEBI" id="CHEBI:30413"/>
    </cofactor>
</comment>
<comment type="subunit">
    <text>Homotetramer.</text>
</comment>
<comment type="subcellular location">
    <subcellularLocation>
        <location>Peroxisome</location>
    </subcellularLocation>
</comment>
<comment type="miscellaneous">
    <text>There are at least five isozymes of catalase in cotton.</text>
</comment>
<comment type="similarity">
    <text evidence="3">Belongs to the catalase family.</text>
</comment>
<evidence type="ECO:0000250" key="1"/>
<evidence type="ECO:0000255" key="2">
    <source>
        <dbReference type="PROSITE-ProRule" id="PRU10013"/>
    </source>
</evidence>
<evidence type="ECO:0000305" key="3"/>